<sequence>MSKKYDAGVKEYRDTYWTPDYIPLDTDLLACFKCTGQEGVPREEVAAAVAAESSTGTWSTVWSELLTDLEFYKGRCYRIEEVPGDKESFYAFIAYPLDLFEEGSVTNVLTSLVGNVFGFKALRHLRLEDIRFPLAFIKTCGGPPNGIQVERDRMNKYGRPLLGCTIKPKLGLSGKNYGRVVYECLRGGLDFTKDDENINSQPFQRWQNRFEFVAEAVKTAEQETGERKGHYLNCTANTPEEMYERAEFAKELGQPIIMHDYITGGFTANTGLARWCRKNGILLHIHRAMHAVIDRHPKHGIHFRVLAKCLRLSGGDQLHTGTVVGKLEGDRQTTLGYIDQLRESFVPEDRTRGNFFDQDWASMPGVFAVASGGIHVWHMPALVAIFGDDSVLQFGGGTHGHPWGSAAGAAANRVALEACVKARNAGREIEKESRDILLEAAKHSPELAIALETWKEIKFEFDTVDKLDV</sequence>
<evidence type="ECO:0000255" key="1">
    <source>
        <dbReference type="HAMAP-Rule" id="MF_01338"/>
    </source>
</evidence>
<reference key="1">
    <citation type="journal article" date="2007" name="BMC Evol. Biol.">
        <title>The ancestor of the Paulinella chromatophore obtained a carboxysomal operon by horizontal gene transfer from a Nitrococcus-like gamma-proteobacterium.</title>
        <authorList>
            <person name="Marin B."/>
            <person name="Nowack E.C."/>
            <person name="Glockner G."/>
            <person name="Melkonian M."/>
        </authorList>
    </citation>
    <scope>NUCLEOTIDE SEQUENCE [GENOMIC DNA]</scope>
    <source>
        <strain>M0880</strain>
    </source>
</reference>
<reference key="2">
    <citation type="journal article" date="2008" name="Curr. Biol.">
        <title>Chromatophore genome sequence of Paulinella sheds light on acquisition of photosynthesis by eukaryotes.</title>
        <authorList>
            <person name="Nowack E.C.M."/>
            <person name="Melkonian M."/>
            <person name="Gloeckner G."/>
        </authorList>
    </citation>
    <scope>NUCLEOTIDE SEQUENCE [LARGE SCALE GENOMIC DNA]</scope>
</reference>
<accession>A5CKB9</accession>
<comment type="function">
    <text evidence="1">RuBisCO catalyzes two reactions: the carboxylation of D-ribulose 1,5-bisphosphate, the primary event in carbon dioxide fixation, as well as the oxidative fragmentation of the pentose substrate. Both reactions occur simultaneously and in competition at the same active site.</text>
</comment>
<comment type="catalytic activity">
    <reaction evidence="1">
        <text>2 (2R)-3-phosphoglycerate + 2 H(+) = D-ribulose 1,5-bisphosphate + CO2 + H2O</text>
        <dbReference type="Rhea" id="RHEA:23124"/>
        <dbReference type="ChEBI" id="CHEBI:15377"/>
        <dbReference type="ChEBI" id="CHEBI:15378"/>
        <dbReference type="ChEBI" id="CHEBI:16526"/>
        <dbReference type="ChEBI" id="CHEBI:57870"/>
        <dbReference type="ChEBI" id="CHEBI:58272"/>
        <dbReference type="EC" id="4.1.1.39"/>
    </reaction>
</comment>
<comment type="catalytic activity">
    <reaction evidence="1">
        <text>D-ribulose 1,5-bisphosphate + O2 = 2-phosphoglycolate + (2R)-3-phosphoglycerate + 2 H(+)</text>
        <dbReference type="Rhea" id="RHEA:36631"/>
        <dbReference type="ChEBI" id="CHEBI:15378"/>
        <dbReference type="ChEBI" id="CHEBI:15379"/>
        <dbReference type="ChEBI" id="CHEBI:57870"/>
        <dbReference type="ChEBI" id="CHEBI:58033"/>
        <dbReference type="ChEBI" id="CHEBI:58272"/>
    </reaction>
</comment>
<comment type="cofactor">
    <cofactor evidence="1">
        <name>Mg(2+)</name>
        <dbReference type="ChEBI" id="CHEBI:18420"/>
    </cofactor>
    <text evidence="1">Binds 1 Mg(2+) ion per subunit.</text>
</comment>
<comment type="subunit">
    <text evidence="1">Heterohexadecamer of 8 large chains and 8 small chains.</text>
</comment>
<comment type="subcellular location">
    <subcellularLocation>
        <location>Plastid</location>
        <location>Organellar chromatophore</location>
    </subcellularLocation>
</comment>
<comment type="miscellaneous">
    <text evidence="1">The basic functional RuBisCO is composed of a large chain homodimer in a 'head-to-tail' conformation. In form I RuBisCO this homodimer is arranged in a barrel-like tetramer with the small subunits forming a tetrameric 'cap' on each end of the 'barrel'.</text>
</comment>
<comment type="similarity">
    <text evidence="1">Belongs to the RuBisCO large chain family. Type I subfamily.</text>
</comment>
<gene>
    <name evidence="1" type="primary">rbcL</name>
    <name type="synonym">cbbL</name>
    <name type="ordered locus">PCC_0908</name>
</gene>
<dbReference type="EC" id="4.1.1.39" evidence="1"/>
<dbReference type="EMBL" id="EF589049">
    <property type="protein sequence ID" value="ABS00401.1"/>
    <property type="molecule type" value="Genomic_DNA"/>
</dbReference>
<dbReference type="EMBL" id="CP000815">
    <property type="protein sequence ID" value="ACB43317.1"/>
    <property type="molecule type" value="Genomic_DNA"/>
</dbReference>
<dbReference type="EMBL" id="AM701774">
    <property type="protein sequence ID" value="CAM91967.1"/>
    <property type="molecule type" value="Genomic_DNA"/>
</dbReference>
<dbReference type="RefSeq" id="YP_002049527.1">
    <property type="nucleotide sequence ID" value="NC_011087.1"/>
</dbReference>
<dbReference type="SMR" id="A5CKB9"/>
<dbReference type="GeneID" id="6481383"/>
<dbReference type="GO" id="GO:0070111">
    <property type="term" value="C:organellar chromatophore"/>
    <property type="evidence" value="ECO:0007669"/>
    <property type="project" value="UniProtKB-SubCell"/>
</dbReference>
<dbReference type="GO" id="GO:0009536">
    <property type="term" value="C:plastid"/>
    <property type="evidence" value="ECO:0007669"/>
    <property type="project" value="UniProtKB-KW"/>
</dbReference>
<dbReference type="GO" id="GO:0000287">
    <property type="term" value="F:magnesium ion binding"/>
    <property type="evidence" value="ECO:0007669"/>
    <property type="project" value="UniProtKB-UniRule"/>
</dbReference>
<dbReference type="GO" id="GO:0004497">
    <property type="term" value="F:monooxygenase activity"/>
    <property type="evidence" value="ECO:0007669"/>
    <property type="project" value="UniProtKB-KW"/>
</dbReference>
<dbReference type="GO" id="GO:0016984">
    <property type="term" value="F:ribulose-bisphosphate carboxylase activity"/>
    <property type="evidence" value="ECO:0007669"/>
    <property type="project" value="UniProtKB-UniRule"/>
</dbReference>
<dbReference type="GO" id="GO:0019253">
    <property type="term" value="P:reductive pentose-phosphate cycle"/>
    <property type="evidence" value="ECO:0007669"/>
    <property type="project" value="UniProtKB-UniRule"/>
</dbReference>
<dbReference type="Gene3D" id="3.20.20.110">
    <property type="entry name" value="Ribulose bisphosphate carboxylase, large subunit, C-terminal domain"/>
    <property type="match status" value="1"/>
</dbReference>
<dbReference type="Gene3D" id="3.30.70.150">
    <property type="entry name" value="RuBisCO large subunit, N-terminal domain"/>
    <property type="match status" value="1"/>
</dbReference>
<dbReference type="HAMAP" id="MF_01338">
    <property type="entry name" value="RuBisCO_L_type1"/>
    <property type="match status" value="1"/>
</dbReference>
<dbReference type="InterPro" id="IPR033966">
    <property type="entry name" value="RuBisCO"/>
</dbReference>
<dbReference type="InterPro" id="IPR020878">
    <property type="entry name" value="RuBisCo_large_chain_AS"/>
</dbReference>
<dbReference type="InterPro" id="IPR000685">
    <property type="entry name" value="RuBisCO_lsu_C"/>
</dbReference>
<dbReference type="InterPro" id="IPR036376">
    <property type="entry name" value="RuBisCO_lsu_C_sf"/>
</dbReference>
<dbReference type="InterPro" id="IPR017443">
    <property type="entry name" value="RuBisCO_lsu_fd_N"/>
</dbReference>
<dbReference type="InterPro" id="IPR036422">
    <property type="entry name" value="RuBisCO_lsu_N_sf"/>
</dbReference>
<dbReference type="InterPro" id="IPR020888">
    <property type="entry name" value="RuBisCO_lsuI"/>
</dbReference>
<dbReference type="NCBIfam" id="NF003252">
    <property type="entry name" value="PRK04208.1"/>
    <property type="match status" value="1"/>
</dbReference>
<dbReference type="PANTHER" id="PTHR42704">
    <property type="entry name" value="RIBULOSE BISPHOSPHATE CARBOXYLASE"/>
    <property type="match status" value="1"/>
</dbReference>
<dbReference type="PANTHER" id="PTHR42704:SF17">
    <property type="entry name" value="RIBULOSE BISPHOSPHATE CARBOXYLASE LARGE CHAIN"/>
    <property type="match status" value="1"/>
</dbReference>
<dbReference type="Pfam" id="PF00016">
    <property type="entry name" value="RuBisCO_large"/>
    <property type="match status" value="1"/>
</dbReference>
<dbReference type="Pfam" id="PF02788">
    <property type="entry name" value="RuBisCO_large_N"/>
    <property type="match status" value="1"/>
</dbReference>
<dbReference type="SFLD" id="SFLDG01052">
    <property type="entry name" value="RuBisCO"/>
    <property type="match status" value="1"/>
</dbReference>
<dbReference type="SFLD" id="SFLDS00014">
    <property type="entry name" value="RuBisCO"/>
    <property type="match status" value="1"/>
</dbReference>
<dbReference type="SFLD" id="SFLDG00301">
    <property type="entry name" value="RuBisCO-like_proteins"/>
    <property type="match status" value="1"/>
</dbReference>
<dbReference type="SUPFAM" id="SSF51649">
    <property type="entry name" value="RuBisCo, C-terminal domain"/>
    <property type="match status" value="1"/>
</dbReference>
<dbReference type="SUPFAM" id="SSF54966">
    <property type="entry name" value="RuBisCO, large subunit, small (N-terminal) domain"/>
    <property type="match status" value="1"/>
</dbReference>
<dbReference type="PROSITE" id="PS00157">
    <property type="entry name" value="RUBISCO_LARGE"/>
    <property type="match status" value="1"/>
</dbReference>
<organism>
    <name type="scientific">Paulinella chromatophora</name>
    <dbReference type="NCBI Taxonomy" id="39717"/>
    <lineage>
        <taxon>Eukaryota</taxon>
        <taxon>Sar</taxon>
        <taxon>Rhizaria</taxon>
        <taxon>Cercozoa</taxon>
        <taxon>Imbricatea</taxon>
        <taxon>Silicofilosea</taxon>
        <taxon>Euglyphida</taxon>
        <taxon>Paulinellidae</taxon>
        <taxon>Paulinella</taxon>
    </lineage>
</organism>
<name>RBL_PAUCH</name>
<keyword id="KW-0113">Calvin cycle</keyword>
<keyword id="KW-0120">Carbon dioxide fixation</keyword>
<keyword id="KW-0456">Lyase</keyword>
<keyword id="KW-0460">Magnesium</keyword>
<keyword id="KW-0479">Metal-binding</keyword>
<keyword id="KW-0503">Monooxygenase</keyword>
<keyword id="KW-0994">Organellar chromatophore</keyword>
<keyword id="KW-0560">Oxidoreductase</keyword>
<keyword id="KW-0934">Plastid</keyword>
<geneLocation type="organellar chromatophore"/>
<protein>
    <recommendedName>
        <fullName evidence="1">Ribulose bisphosphate carboxylase large chain</fullName>
        <shortName evidence="1">RuBisCO large subunit</shortName>
        <ecNumber evidence="1">4.1.1.39</ecNumber>
    </recommendedName>
</protein>
<proteinExistence type="inferred from homology"/>
<feature type="chain" id="PRO_0000355800" description="Ribulose bisphosphate carboxylase large chain">
    <location>
        <begin position="1"/>
        <end position="469"/>
    </location>
</feature>
<feature type="active site" description="Proton acceptor" evidence="1">
    <location>
        <position position="167"/>
    </location>
</feature>
<feature type="active site" description="Proton acceptor" evidence="1">
    <location>
        <position position="286"/>
    </location>
</feature>
<feature type="binding site" description="in homodimeric partner" evidence="1">
    <location>
        <position position="115"/>
    </location>
    <ligand>
        <name>substrate</name>
    </ligand>
</feature>
<feature type="binding site" evidence="1">
    <location>
        <position position="165"/>
    </location>
    <ligand>
        <name>substrate</name>
    </ligand>
</feature>
<feature type="binding site" evidence="1">
    <location>
        <position position="169"/>
    </location>
    <ligand>
        <name>substrate</name>
    </ligand>
</feature>
<feature type="binding site" description="via carbamate group" evidence="1">
    <location>
        <position position="193"/>
    </location>
    <ligand>
        <name>Mg(2+)</name>
        <dbReference type="ChEBI" id="CHEBI:18420"/>
    </ligand>
</feature>
<feature type="binding site" evidence="1">
    <location>
        <position position="195"/>
    </location>
    <ligand>
        <name>Mg(2+)</name>
        <dbReference type="ChEBI" id="CHEBI:18420"/>
    </ligand>
</feature>
<feature type="binding site" evidence="1">
    <location>
        <position position="196"/>
    </location>
    <ligand>
        <name>Mg(2+)</name>
        <dbReference type="ChEBI" id="CHEBI:18420"/>
    </ligand>
</feature>
<feature type="binding site" evidence="1">
    <location>
        <position position="287"/>
    </location>
    <ligand>
        <name>substrate</name>
    </ligand>
</feature>
<feature type="binding site" evidence="1">
    <location>
        <position position="319"/>
    </location>
    <ligand>
        <name>substrate</name>
    </ligand>
</feature>
<feature type="binding site" evidence="1">
    <location>
        <position position="371"/>
    </location>
    <ligand>
        <name>substrate</name>
    </ligand>
</feature>
<feature type="site" description="Transition state stabilizer" evidence="1">
    <location>
        <position position="326"/>
    </location>
</feature>
<feature type="modified residue" description="N6-carboxylysine" evidence="1">
    <location>
        <position position="193"/>
    </location>
</feature>